<reference evidence="7" key="1">
    <citation type="journal article" date="2003" name="PLoS Biol.">
        <title>The genome sequence of Caenorhabditis briggsae: a platform for comparative genomics.</title>
        <authorList>
            <person name="Stein L.D."/>
            <person name="Bao Z."/>
            <person name="Blasiar D."/>
            <person name="Blumenthal T."/>
            <person name="Brent M.R."/>
            <person name="Chen N."/>
            <person name="Chinwalla A."/>
            <person name="Clarke L."/>
            <person name="Clee C."/>
            <person name="Coghlan A."/>
            <person name="Coulson A."/>
            <person name="D'Eustachio P."/>
            <person name="Fitch D.H.A."/>
            <person name="Fulton L.A."/>
            <person name="Fulton R.E."/>
            <person name="Griffiths-Jones S."/>
            <person name="Harris T.W."/>
            <person name="Hillier L.W."/>
            <person name="Kamath R."/>
            <person name="Kuwabara P.E."/>
            <person name="Mardis E.R."/>
            <person name="Marra M.A."/>
            <person name="Miner T.L."/>
            <person name="Minx P."/>
            <person name="Mullikin J.C."/>
            <person name="Plumb R.W."/>
            <person name="Rogers J."/>
            <person name="Schein J.E."/>
            <person name="Sohrmann M."/>
            <person name="Spieth J."/>
            <person name="Stajich J.E."/>
            <person name="Wei C."/>
            <person name="Willey D."/>
            <person name="Wilson R.K."/>
            <person name="Durbin R.M."/>
            <person name="Waterston R.H."/>
        </authorList>
    </citation>
    <scope>NUCLEOTIDE SEQUENCE [LARGE SCALE GENOMIC DNA]</scope>
    <source>
        <strain evidence="7">AF16</strain>
    </source>
</reference>
<reference evidence="4" key="2">
    <citation type="journal article" date="2005" name="Genetics">
        <title>Autosomal genes of autosomal/X-linked duplicated gene pairs and germ-line proliferation in Caenorhabditis elegans.</title>
        <authorList>
            <person name="Maciejowski J."/>
            <person name="Ahn J.H."/>
            <person name="Cipriani P.G."/>
            <person name="Killian D.J."/>
            <person name="Chaudhary A.L."/>
            <person name="Lee J.I."/>
            <person name="Voutev R."/>
            <person name="Johnsen R.C."/>
            <person name="Baillie D.L."/>
            <person name="Gunsalus K.C."/>
            <person name="Fitch D.H."/>
            <person name="Hubbard E.J."/>
        </authorList>
    </citation>
    <scope>DISRUPTION PHENOTYPE</scope>
</reference>
<name>RL112_CAEBR</name>
<evidence type="ECO:0000250" key="1">
    <source>
        <dbReference type="UniProtKB" id="P0C0W9"/>
    </source>
</evidence>
<evidence type="ECO:0000255" key="2">
    <source>
        <dbReference type="RuleBase" id="RU003930"/>
    </source>
</evidence>
<evidence type="ECO:0000269" key="3">
    <source>
    </source>
</evidence>
<evidence type="ECO:0000305" key="4"/>
<evidence type="ECO:0000305" key="5">
    <source>
    </source>
</evidence>
<evidence type="ECO:0000312" key="6">
    <source>
        <dbReference type="EMBL" id="CAP32718.1"/>
    </source>
</evidence>
<evidence type="ECO:0000312" key="7">
    <source>
        <dbReference type="Proteomes" id="UP000008549"/>
    </source>
</evidence>
<evidence type="ECO:0000312" key="8">
    <source>
        <dbReference type="WormBase" id="CBG14053"/>
    </source>
</evidence>
<organism evidence="7">
    <name type="scientific">Caenorhabditis briggsae</name>
    <dbReference type="NCBI Taxonomy" id="6238"/>
    <lineage>
        <taxon>Eukaryota</taxon>
        <taxon>Metazoa</taxon>
        <taxon>Ecdysozoa</taxon>
        <taxon>Nematoda</taxon>
        <taxon>Chromadorea</taxon>
        <taxon>Rhabditida</taxon>
        <taxon>Rhabditina</taxon>
        <taxon>Rhabditomorpha</taxon>
        <taxon>Rhabditoidea</taxon>
        <taxon>Rhabditidae</taxon>
        <taxon>Peloderinae</taxon>
        <taxon>Caenorhabditis</taxon>
    </lineage>
</organism>
<dbReference type="EMBL" id="HE600983">
    <property type="protein sequence ID" value="CAP32718.1"/>
    <property type="molecule type" value="Genomic_DNA"/>
</dbReference>
<dbReference type="SMR" id="A8XJ93"/>
<dbReference type="FunCoup" id="A8XJ93">
    <property type="interactions" value="1595"/>
</dbReference>
<dbReference type="STRING" id="6238.A8XJ93"/>
<dbReference type="EnsemblMetazoa" id="CBG14053.1">
    <property type="protein sequence ID" value="CBG14053.1"/>
    <property type="gene ID" value="WBGene00034687"/>
</dbReference>
<dbReference type="KEGG" id="cbr:CBG_14053"/>
<dbReference type="CTD" id="8586275"/>
<dbReference type="WormBase" id="CBG14053">
    <property type="protein sequence ID" value="CBP17996"/>
    <property type="gene ID" value="WBGene00034687"/>
    <property type="gene designation" value="Cbr-rpl-11.2"/>
</dbReference>
<dbReference type="eggNOG" id="KOG0397">
    <property type="taxonomic scope" value="Eukaryota"/>
</dbReference>
<dbReference type="HOGENOM" id="CLU_061015_3_0_1"/>
<dbReference type="InParanoid" id="A8XJ93"/>
<dbReference type="OMA" id="NPMKELK"/>
<dbReference type="OrthoDB" id="1734943at2759"/>
<dbReference type="Proteomes" id="UP000008549">
    <property type="component" value="Unassembled WGS sequence"/>
</dbReference>
<dbReference type="GO" id="GO:0022625">
    <property type="term" value="C:cytosolic large ribosomal subunit"/>
    <property type="evidence" value="ECO:0000318"/>
    <property type="project" value="GO_Central"/>
</dbReference>
<dbReference type="GO" id="GO:0005634">
    <property type="term" value="C:nucleus"/>
    <property type="evidence" value="ECO:0007669"/>
    <property type="project" value="UniProtKB-SubCell"/>
</dbReference>
<dbReference type="GO" id="GO:0003723">
    <property type="term" value="F:RNA binding"/>
    <property type="evidence" value="ECO:0000318"/>
    <property type="project" value="GO_Central"/>
</dbReference>
<dbReference type="GO" id="GO:0019843">
    <property type="term" value="F:rRNA binding"/>
    <property type="evidence" value="ECO:0007669"/>
    <property type="project" value="UniProtKB-KW"/>
</dbReference>
<dbReference type="GO" id="GO:0003735">
    <property type="term" value="F:structural constituent of ribosome"/>
    <property type="evidence" value="ECO:0000318"/>
    <property type="project" value="GO_Central"/>
</dbReference>
<dbReference type="GO" id="GO:0006412">
    <property type="term" value="P:translation"/>
    <property type="evidence" value="ECO:0000318"/>
    <property type="project" value="GO_Central"/>
</dbReference>
<dbReference type="FunFam" id="3.30.1440.10:FF:000004">
    <property type="entry name" value="60S ribosomal protein L11, putative"/>
    <property type="match status" value="1"/>
</dbReference>
<dbReference type="Gene3D" id="3.30.1440.10">
    <property type="match status" value="1"/>
</dbReference>
<dbReference type="InterPro" id="IPR002132">
    <property type="entry name" value="Ribosomal_uL5"/>
</dbReference>
<dbReference type="InterPro" id="IPR031309">
    <property type="entry name" value="Ribosomal_uL5_C"/>
</dbReference>
<dbReference type="InterPro" id="IPR020929">
    <property type="entry name" value="Ribosomal_uL5_CS"/>
</dbReference>
<dbReference type="InterPro" id="IPR022803">
    <property type="entry name" value="Ribosomal_uL5_dom_sf"/>
</dbReference>
<dbReference type="InterPro" id="IPR031310">
    <property type="entry name" value="Ribosomal_uL5_N"/>
</dbReference>
<dbReference type="NCBIfam" id="NF003258">
    <property type="entry name" value="PRK04219.1"/>
    <property type="match status" value="1"/>
</dbReference>
<dbReference type="PANTHER" id="PTHR11994">
    <property type="entry name" value="60S RIBOSOMAL PROTEIN L11-RELATED"/>
    <property type="match status" value="1"/>
</dbReference>
<dbReference type="Pfam" id="PF00281">
    <property type="entry name" value="Ribosomal_L5"/>
    <property type="match status" value="1"/>
</dbReference>
<dbReference type="Pfam" id="PF00673">
    <property type="entry name" value="Ribosomal_L5_C"/>
    <property type="match status" value="1"/>
</dbReference>
<dbReference type="PIRSF" id="PIRSF002161">
    <property type="entry name" value="Ribosomal_L5"/>
    <property type="match status" value="1"/>
</dbReference>
<dbReference type="SUPFAM" id="SSF55282">
    <property type="entry name" value="RL5-like"/>
    <property type="match status" value="1"/>
</dbReference>
<dbReference type="PROSITE" id="PS00358">
    <property type="entry name" value="RIBOSOMAL_L5"/>
    <property type="match status" value="1"/>
</dbReference>
<proteinExistence type="inferred from homology"/>
<keyword id="KW-0963">Cytoplasm</keyword>
<keyword id="KW-0539">Nucleus</keyword>
<keyword id="KW-1185">Reference proteome</keyword>
<keyword id="KW-0687">Ribonucleoprotein</keyword>
<keyword id="KW-0689">Ribosomal protein</keyword>
<keyword id="KW-0694">RNA-binding</keyword>
<keyword id="KW-0699">rRNA-binding</keyword>
<protein>
    <recommendedName>
        <fullName evidence="4">Large ribosomal subunit protein uL5B</fullName>
    </recommendedName>
    <alternativeName>
        <fullName evidence="4">60S ribosomal protein L11-2</fullName>
    </alternativeName>
</protein>
<sequence length="196" mass="22776">MGDIEKQTEIREKKARNVMRELKIQKLCLNICVGESGDRLTRAAKVLEQLTGQTPVFSKARYTVRTFGIRRNEKIAVHCTVRGPKAEEILEKGLKVKEYELYKENFSDTGNFGFGVQEHIDLGIKYDPSIGIYGMDFYVVLDRAGRRIAKRRRAPGRVGPSHRVEREESIKWFQQKYDGIILPPKPKVKRTFHRRR</sequence>
<comment type="function">
    <text evidence="1">Component of the ribosome, a large ribonucleoprotein complex responsible for the synthesis of proteins in the cell. The small ribosomal subunit (SSU) binds messenger RNAs (mRNAs) and translates the encoded message by selecting cognate aminoacyl-transfer RNA (tRNA) molecules. The large subunit (LSU) contains the ribosomal catalytic site termed the peptidyl transferase center (PTC), which catalyzes the formation of peptide bonds, thereby polymerizing the amino acids delivered by tRNAs into a polypeptide chain. The nascent polypeptides leave the ribosome through a tunnel in the LSU and interact with protein factors that function in enzymatic processing, targeting, and the membrane insertion of nascent chains at the exit of the ribosomal tunnel.</text>
</comment>
<comment type="subunit">
    <text evidence="1">Component of the large ribosomal subunit.</text>
</comment>
<comment type="subcellular location">
    <subcellularLocation>
        <location evidence="1">Nucleus</location>
    </subcellularLocation>
    <subcellularLocation>
        <location evidence="1">Cytoplasm</location>
    </subcellularLocation>
</comment>
<comment type="disruption phenotype">
    <text evidence="3">RNAi-mediated knockdown results in few viable embryos and as a result few live progeny and defective growth.</text>
</comment>
<comment type="miscellaneous">
    <text evidence="5">There's a functional difference between the two L11-encoding proteins in C.briggsae. rpl-11.1 plays a role in the germline whereas rpl-11.2 has a somatic function.</text>
</comment>
<comment type="similarity">
    <text evidence="2">Belongs to the universal ribosomal protein uL5 family.</text>
</comment>
<accession>A8XJ93</accession>
<gene>
    <name evidence="8" type="primary">rpl-11.2</name>
    <name evidence="8" type="ORF">CBG14053</name>
    <name evidence="6" type="ORF">CBG_14053</name>
</gene>
<feature type="chain" id="PRO_0000436902" description="Large ribosomal subunit protein uL5B">
    <location>
        <begin position="1"/>
        <end position="196"/>
    </location>
</feature>